<name>RL15_SHOC1</name>
<proteinExistence type="inferred from homology"/>
<feature type="chain" id="PRO_0000104670" description="Large ribosomal subunit protein uL15">
    <location>
        <begin position="1"/>
        <end position="146"/>
    </location>
</feature>
<feature type="region of interest" description="Disordered" evidence="2">
    <location>
        <begin position="1"/>
        <end position="58"/>
    </location>
</feature>
<feature type="compositionally biased region" description="Basic and acidic residues" evidence="2">
    <location>
        <begin position="1"/>
        <end position="13"/>
    </location>
</feature>
<feature type="compositionally biased region" description="Gly residues" evidence="2">
    <location>
        <begin position="21"/>
        <end position="31"/>
    </location>
</feature>
<feature type="compositionally biased region" description="Gly residues" evidence="2">
    <location>
        <begin position="42"/>
        <end position="52"/>
    </location>
</feature>
<sequence length="146" mass="15689">MKLHELQPAEGSRKVRNRVGRGIGSGNGKTAGKGHKGQKARSGGGVRPGFEGGQNPLYRRLPKRGFTNIHRKEYTVVNLDVLNRFEAGTEVTPELLIETKTVKNVKHGIKVLGNGNLDKNLTVKAHKFSASAVKAIEAAGGKTEVV</sequence>
<keyword id="KW-1185">Reference proteome</keyword>
<keyword id="KW-0687">Ribonucleoprotein</keyword>
<keyword id="KW-0689">Ribosomal protein</keyword>
<keyword id="KW-0694">RNA-binding</keyword>
<keyword id="KW-0699">rRNA-binding</keyword>
<comment type="function">
    <text evidence="1">Binds to the 23S rRNA.</text>
</comment>
<comment type="subunit">
    <text evidence="1">Part of the 50S ribosomal subunit.</text>
</comment>
<comment type="similarity">
    <text evidence="1">Belongs to the universal ribosomal protein uL15 family.</text>
</comment>
<evidence type="ECO:0000255" key="1">
    <source>
        <dbReference type="HAMAP-Rule" id="MF_01341"/>
    </source>
</evidence>
<evidence type="ECO:0000256" key="2">
    <source>
        <dbReference type="SAM" id="MobiDB-lite"/>
    </source>
</evidence>
<evidence type="ECO:0000305" key="3"/>
<protein>
    <recommendedName>
        <fullName evidence="1">Large ribosomal subunit protein uL15</fullName>
    </recommendedName>
    <alternativeName>
        <fullName evidence="3">50S ribosomal protein L15</fullName>
    </alternativeName>
</protein>
<organism>
    <name type="scientific">Shouchella clausii (strain KSM-K16)</name>
    <name type="common">Alkalihalobacillus clausii</name>
    <dbReference type="NCBI Taxonomy" id="66692"/>
    <lineage>
        <taxon>Bacteria</taxon>
        <taxon>Bacillati</taxon>
        <taxon>Bacillota</taxon>
        <taxon>Bacilli</taxon>
        <taxon>Bacillales</taxon>
        <taxon>Bacillaceae</taxon>
        <taxon>Shouchella</taxon>
    </lineage>
</organism>
<accession>Q5WLP3</accession>
<reference key="1">
    <citation type="submission" date="2003-10" db="EMBL/GenBank/DDBJ databases">
        <title>The complete genome sequence of the alkaliphilic Bacillus clausii KSM-K16.</title>
        <authorList>
            <person name="Takaki Y."/>
            <person name="Kageyama Y."/>
            <person name="Shimamura S."/>
            <person name="Suzuki H."/>
            <person name="Nishi S."/>
            <person name="Hatada Y."/>
            <person name="Kawai S."/>
            <person name="Ito S."/>
            <person name="Horikoshi K."/>
        </authorList>
    </citation>
    <scope>NUCLEOTIDE SEQUENCE [LARGE SCALE GENOMIC DNA]</scope>
    <source>
        <strain>KSM-K16</strain>
    </source>
</reference>
<gene>
    <name evidence="1" type="primary">rplO</name>
    <name type="ordered locus">ABC0169</name>
</gene>
<dbReference type="EMBL" id="AP006627">
    <property type="protein sequence ID" value="BAD62712.1"/>
    <property type="molecule type" value="Genomic_DNA"/>
</dbReference>
<dbReference type="RefSeq" id="WP_011245033.1">
    <property type="nucleotide sequence ID" value="NC_006582.1"/>
</dbReference>
<dbReference type="SMR" id="Q5WLP3"/>
<dbReference type="STRING" id="66692.ABC0169"/>
<dbReference type="GeneID" id="86924205"/>
<dbReference type="KEGG" id="bcl:ABC0169"/>
<dbReference type="eggNOG" id="COG0200">
    <property type="taxonomic scope" value="Bacteria"/>
</dbReference>
<dbReference type="HOGENOM" id="CLU_055188_4_2_9"/>
<dbReference type="OrthoDB" id="9810293at2"/>
<dbReference type="Proteomes" id="UP000001168">
    <property type="component" value="Chromosome"/>
</dbReference>
<dbReference type="GO" id="GO:0022625">
    <property type="term" value="C:cytosolic large ribosomal subunit"/>
    <property type="evidence" value="ECO:0007669"/>
    <property type="project" value="TreeGrafter"/>
</dbReference>
<dbReference type="GO" id="GO:0019843">
    <property type="term" value="F:rRNA binding"/>
    <property type="evidence" value="ECO:0007669"/>
    <property type="project" value="UniProtKB-UniRule"/>
</dbReference>
<dbReference type="GO" id="GO:0003735">
    <property type="term" value="F:structural constituent of ribosome"/>
    <property type="evidence" value="ECO:0007669"/>
    <property type="project" value="InterPro"/>
</dbReference>
<dbReference type="GO" id="GO:0006412">
    <property type="term" value="P:translation"/>
    <property type="evidence" value="ECO:0007669"/>
    <property type="project" value="UniProtKB-UniRule"/>
</dbReference>
<dbReference type="Gene3D" id="3.100.10.10">
    <property type="match status" value="1"/>
</dbReference>
<dbReference type="HAMAP" id="MF_01341">
    <property type="entry name" value="Ribosomal_uL15"/>
    <property type="match status" value="1"/>
</dbReference>
<dbReference type="InterPro" id="IPR030878">
    <property type="entry name" value="Ribosomal_uL15"/>
</dbReference>
<dbReference type="InterPro" id="IPR021131">
    <property type="entry name" value="Ribosomal_uL15/eL18"/>
</dbReference>
<dbReference type="InterPro" id="IPR036227">
    <property type="entry name" value="Ribosomal_uL15/eL18_sf"/>
</dbReference>
<dbReference type="InterPro" id="IPR005749">
    <property type="entry name" value="Ribosomal_uL15_bac-type"/>
</dbReference>
<dbReference type="InterPro" id="IPR001196">
    <property type="entry name" value="Ribosomal_uL15_CS"/>
</dbReference>
<dbReference type="NCBIfam" id="TIGR01071">
    <property type="entry name" value="rplO_bact"/>
    <property type="match status" value="1"/>
</dbReference>
<dbReference type="PANTHER" id="PTHR12934">
    <property type="entry name" value="50S RIBOSOMAL PROTEIN L15"/>
    <property type="match status" value="1"/>
</dbReference>
<dbReference type="PANTHER" id="PTHR12934:SF11">
    <property type="entry name" value="LARGE RIBOSOMAL SUBUNIT PROTEIN UL15M"/>
    <property type="match status" value="1"/>
</dbReference>
<dbReference type="Pfam" id="PF00828">
    <property type="entry name" value="Ribosomal_L27A"/>
    <property type="match status" value="1"/>
</dbReference>
<dbReference type="SUPFAM" id="SSF52080">
    <property type="entry name" value="Ribosomal proteins L15p and L18e"/>
    <property type="match status" value="1"/>
</dbReference>
<dbReference type="PROSITE" id="PS00475">
    <property type="entry name" value="RIBOSOMAL_L15"/>
    <property type="match status" value="1"/>
</dbReference>